<protein>
    <recommendedName>
        <fullName>Protein FAM72C</fullName>
    </recommendedName>
</protein>
<keyword id="KW-1185">Reference proteome</keyword>
<dbReference type="EMBL" id="AC246680">
    <property type="status" value="NOT_ANNOTATED_CDS"/>
    <property type="molecule type" value="Genomic_DNA"/>
</dbReference>
<dbReference type="CCDS" id="CCDS72850.1"/>
<dbReference type="RefSeq" id="NP_001274314.1">
    <property type="nucleotide sequence ID" value="NM_001287385.2"/>
</dbReference>
<dbReference type="RefSeq" id="XP_047280384.1">
    <property type="nucleotide sequence ID" value="XM_047424428.1"/>
</dbReference>
<dbReference type="RefSeq" id="XP_054193496.1">
    <property type="nucleotide sequence ID" value="XM_054337521.1"/>
</dbReference>
<dbReference type="BioGRID" id="299851">
    <property type="interactions" value="2"/>
</dbReference>
<dbReference type="FunCoup" id="H0Y354">
    <property type="interactions" value="494"/>
</dbReference>
<dbReference type="STRING" id="9606.ENSP00000463032"/>
<dbReference type="iPTMnet" id="H0Y354"/>
<dbReference type="PhosphoSitePlus" id="H0Y354"/>
<dbReference type="BioMuta" id="FAM72C"/>
<dbReference type="MassIVE" id="H0Y354"/>
<dbReference type="PaxDb" id="9606-ENSP00000463032"/>
<dbReference type="Pumba" id="H0Y354"/>
<dbReference type="Ensembl" id="ENST00000584486.6">
    <property type="protein sequence ID" value="ENSP00000463032.1"/>
    <property type="gene ID" value="ENSG00000263513.6"/>
</dbReference>
<dbReference type="GeneID" id="554282"/>
<dbReference type="KEGG" id="hsa:554282"/>
<dbReference type="MANE-Select" id="ENST00000584486.6">
    <property type="protein sequence ID" value="ENSP00000463032.1"/>
    <property type="RefSeq nucleotide sequence ID" value="NM_001287385.2"/>
    <property type="RefSeq protein sequence ID" value="NP_001274314.1"/>
</dbReference>
<dbReference type="UCSC" id="uc031uqs.2">
    <property type="organism name" value="human"/>
</dbReference>
<dbReference type="AGR" id="HGNC:30602"/>
<dbReference type="CTD" id="554282"/>
<dbReference type="DisGeNET" id="554282"/>
<dbReference type="GeneCards" id="FAM72C"/>
<dbReference type="HGNC" id="HGNC:30602">
    <property type="gene designation" value="FAM72C"/>
</dbReference>
<dbReference type="HPA" id="ENSG00000263513">
    <property type="expression patterns" value="Tissue enhanced (bone marrow, lymphoid tissue)"/>
</dbReference>
<dbReference type="neXtProt" id="NX_H0Y354"/>
<dbReference type="OpenTargets" id="ENSG00000263513"/>
<dbReference type="VEuPathDB" id="HostDB:ENSG00000263513"/>
<dbReference type="eggNOG" id="ENOG502S1HA">
    <property type="taxonomic scope" value="Eukaryota"/>
</dbReference>
<dbReference type="GeneTree" id="ENSGT00390000005106"/>
<dbReference type="HOGENOM" id="CLU_127817_0_0_1"/>
<dbReference type="InParanoid" id="H0Y354"/>
<dbReference type="OMA" id="GHLWIFH"/>
<dbReference type="OrthoDB" id="2526683at2759"/>
<dbReference type="PAN-GO" id="H0Y354">
    <property type="GO annotations" value="1 GO annotation based on evolutionary models"/>
</dbReference>
<dbReference type="PhylomeDB" id="H0Y354"/>
<dbReference type="PathwayCommons" id="H0Y354"/>
<dbReference type="BioGRID-ORCS" id="554282">
    <property type="hits" value="12 hits in 175 CRISPR screens"/>
</dbReference>
<dbReference type="GenomeRNAi" id="554282"/>
<dbReference type="Pharos" id="H0Y354">
    <property type="development level" value="Tdark"/>
</dbReference>
<dbReference type="PRO" id="PR:H0Y354"/>
<dbReference type="Proteomes" id="UP000005640">
    <property type="component" value="Chromosome 1"/>
</dbReference>
<dbReference type="RNAct" id="H0Y354">
    <property type="molecule type" value="protein"/>
</dbReference>
<dbReference type="Bgee" id="ENSG00000263513">
    <property type="expression patterns" value="Expressed in primordial germ cell in gonad and 88 other cell types or tissues"/>
</dbReference>
<dbReference type="ExpressionAtlas" id="H0Y354">
    <property type="expression patterns" value="baseline and differential"/>
</dbReference>
<dbReference type="GO" id="GO:0005829">
    <property type="term" value="C:cytosol"/>
    <property type="evidence" value="ECO:0000314"/>
    <property type="project" value="HPA"/>
</dbReference>
<dbReference type="GO" id="GO:0043231">
    <property type="term" value="C:intracellular membrane-bounded organelle"/>
    <property type="evidence" value="ECO:0000314"/>
    <property type="project" value="HPA"/>
</dbReference>
<dbReference type="InterPro" id="IPR026768">
    <property type="entry name" value="YPEH2ZP"/>
</dbReference>
<dbReference type="PANTHER" id="PTHR31841">
    <property type="entry name" value="PROTEIN FAM72A-RELATED"/>
    <property type="match status" value="1"/>
</dbReference>
<dbReference type="PANTHER" id="PTHR31841:SF1">
    <property type="entry name" value="PROTEIN FAM72A-RELATED"/>
    <property type="match status" value="1"/>
</dbReference>
<dbReference type="Pfam" id="PF14976">
    <property type="entry name" value="YPEH2ZP"/>
    <property type="match status" value="1"/>
</dbReference>
<reference key="1">
    <citation type="journal article" date="2006" name="Nature">
        <title>The DNA sequence and biological annotation of human chromosome 1.</title>
        <authorList>
            <person name="Gregory S.G."/>
            <person name="Barlow K.F."/>
            <person name="McLay K.E."/>
            <person name="Kaul R."/>
            <person name="Swarbreck D."/>
            <person name="Dunham A."/>
            <person name="Scott C.E."/>
            <person name="Howe K.L."/>
            <person name="Woodfine K."/>
            <person name="Spencer C.C.A."/>
            <person name="Jones M.C."/>
            <person name="Gillson C."/>
            <person name="Searle S."/>
            <person name="Zhou Y."/>
            <person name="Kokocinski F."/>
            <person name="McDonald L."/>
            <person name="Evans R."/>
            <person name="Phillips K."/>
            <person name="Atkinson A."/>
            <person name="Cooper R."/>
            <person name="Jones C."/>
            <person name="Hall R.E."/>
            <person name="Andrews T.D."/>
            <person name="Lloyd C."/>
            <person name="Ainscough R."/>
            <person name="Almeida J.P."/>
            <person name="Ambrose K.D."/>
            <person name="Anderson F."/>
            <person name="Andrew R.W."/>
            <person name="Ashwell R.I.S."/>
            <person name="Aubin K."/>
            <person name="Babbage A.K."/>
            <person name="Bagguley C.L."/>
            <person name="Bailey J."/>
            <person name="Beasley H."/>
            <person name="Bethel G."/>
            <person name="Bird C.P."/>
            <person name="Bray-Allen S."/>
            <person name="Brown J.Y."/>
            <person name="Brown A.J."/>
            <person name="Buckley D."/>
            <person name="Burton J."/>
            <person name="Bye J."/>
            <person name="Carder C."/>
            <person name="Chapman J.C."/>
            <person name="Clark S.Y."/>
            <person name="Clarke G."/>
            <person name="Clee C."/>
            <person name="Cobley V."/>
            <person name="Collier R.E."/>
            <person name="Corby N."/>
            <person name="Coville G.J."/>
            <person name="Davies J."/>
            <person name="Deadman R."/>
            <person name="Dunn M."/>
            <person name="Earthrowl M."/>
            <person name="Ellington A.G."/>
            <person name="Errington H."/>
            <person name="Frankish A."/>
            <person name="Frankland J."/>
            <person name="French L."/>
            <person name="Garner P."/>
            <person name="Garnett J."/>
            <person name="Gay L."/>
            <person name="Ghori M.R.J."/>
            <person name="Gibson R."/>
            <person name="Gilby L.M."/>
            <person name="Gillett W."/>
            <person name="Glithero R.J."/>
            <person name="Grafham D.V."/>
            <person name="Griffiths C."/>
            <person name="Griffiths-Jones S."/>
            <person name="Grocock R."/>
            <person name="Hammond S."/>
            <person name="Harrison E.S.I."/>
            <person name="Hart E."/>
            <person name="Haugen E."/>
            <person name="Heath P.D."/>
            <person name="Holmes S."/>
            <person name="Holt K."/>
            <person name="Howden P.J."/>
            <person name="Hunt A.R."/>
            <person name="Hunt S.E."/>
            <person name="Hunter G."/>
            <person name="Isherwood J."/>
            <person name="James R."/>
            <person name="Johnson C."/>
            <person name="Johnson D."/>
            <person name="Joy A."/>
            <person name="Kay M."/>
            <person name="Kershaw J.K."/>
            <person name="Kibukawa M."/>
            <person name="Kimberley A.M."/>
            <person name="King A."/>
            <person name="Knights A.J."/>
            <person name="Lad H."/>
            <person name="Laird G."/>
            <person name="Lawlor S."/>
            <person name="Leongamornlert D.A."/>
            <person name="Lloyd D.M."/>
            <person name="Loveland J."/>
            <person name="Lovell J."/>
            <person name="Lush M.J."/>
            <person name="Lyne R."/>
            <person name="Martin S."/>
            <person name="Mashreghi-Mohammadi M."/>
            <person name="Matthews L."/>
            <person name="Matthews N.S.W."/>
            <person name="McLaren S."/>
            <person name="Milne S."/>
            <person name="Mistry S."/>
            <person name="Moore M.J.F."/>
            <person name="Nickerson T."/>
            <person name="O'Dell C.N."/>
            <person name="Oliver K."/>
            <person name="Palmeiri A."/>
            <person name="Palmer S.A."/>
            <person name="Parker A."/>
            <person name="Patel D."/>
            <person name="Pearce A.V."/>
            <person name="Peck A.I."/>
            <person name="Pelan S."/>
            <person name="Phelps K."/>
            <person name="Phillimore B.J."/>
            <person name="Plumb R."/>
            <person name="Rajan J."/>
            <person name="Raymond C."/>
            <person name="Rouse G."/>
            <person name="Saenphimmachak C."/>
            <person name="Sehra H.K."/>
            <person name="Sheridan E."/>
            <person name="Shownkeen R."/>
            <person name="Sims S."/>
            <person name="Skuce C.D."/>
            <person name="Smith M."/>
            <person name="Steward C."/>
            <person name="Subramanian S."/>
            <person name="Sycamore N."/>
            <person name="Tracey A."/>
            <person name="Tromans A."/>
            <person name="Van Helmond Z."/>
            <person name="Wall M."/>
            <person name="Wallis J.M."/>
            <person name="White S."/>
            <person name="Whitehead S.L."/>
            <person name="Wilkinson J.E."/>
            <person name="Willey D.L."/>
            <person name="Williams H."/>
            <person name="Wilming L."/>
            <person name="Wray P.W."/>
            <person name="Wu Z."/>
            <person name="Coulson A."/>
            <person name="Vaudin M."/>
            <person name="Sulston J.E."/>
            <person name="Durbin R.M."/>
            <person name="Hubbard T."/>
            <person name="Wooster R."/>
            <person name="Dunham I."/>
            <person name="Carter N.P."/>
            <person name="McVean G."/>
            <person name="Ross M.T."/>
            <person name="Harrow J."/>
            <person name="Olson M.V."/>
            <person name="Beck S."/>
            <person name="Rogers J."/>
            <person name="Bentley D.R."/>
        </authorList>
    </citation>
    <scope>NUCLEOTIDE SEQUENCE [LARGE SCALE GENOMIC DNA]</scope>
</reference>
<comment type="similarity">
    <text evidence="1">Belongs to the FAM72 family.</text>
</comment>
<evidence type="ECO:0000305" key="1"/>
<accession>H0Y354</accession>
<organism>
    <name type="scientific">Homo sapiens</name>
    <name type="common">Human</name>
    <dbReference type="NCBI Taxonomy" id="9606"/>
    <lineage>
        <taxon>Eukaryota</taxon>
        <taxon>Metazoa</taxon>
        <taxon>Chordata</taxon>
        <taxon>Craniata</taxon>
        <taxon>Vertebrata</taxon>
        <taxon>Euteleostomi</taxon>
        <taxon>Mammalia</taxon>
        <taxon>Eutheria</taxon>
        <taxon>Euarchontoglires</taxon>
        <taxon>Primates</taxon>
        <taxon>Haplorrhini</taxon>
        <taxon>Catarrhini</taxon>
        <taxon>Hominidae</taxon>
        <taxon>Homo</taxon>
    </lineage>
</organism>
<sequence>MSTNICSFKDRCVSILCCKFCKQVLSSRGMKAVLLADTEIDLFSTDIPPTNAVDFTGRCYFTKICKCKLKDIACLKCGNIVVYHVIVPCSSCLLSCNNRHFWMFHSQAVYDINRLDSTGVNVLLRGNLPEIEESTDEDVLNISAEECIR</sequence>
<proteinExistence type="inferred from homology"/>
<feature type="chain" id="PRO_0000424443" description="Protein FAM72C">
    <location>
        <begin position="1"/>
        <end position="149"/>
    </location>
</feature>
<name>FA72C_HUMAN</name>
<gene>
    <name type="primary">FAM72C</name>
</gene>